<sequence>MSDPRPSQAEKHKLGRAASKFKDPSRAMQSDDYFARKFKAINGSMGPATLNTSSLSEGGGGGGGPANGTPAVPKMGVRARVSEWPPKKDCSKDLACKTLWESRSQSSYESATSIIQNGQNDQVDRQQEEQLDLDFVEAKYTIGDIFVHSPQRGLHPIRQRSNSDITISDIDTEDVLDQHAVNPNTGAALHREYGSTSSIDRQGLSGENVFAMLRGYRIESYDPKVTSSFGFPDFFPCDTAISPSLHAAAQISRGEFVRISGLDYMDGGLLMGRDRDKPFKRRLKSESVETSLFRKLRTVKSEHETFKFTSDLEEGRLDRGIRPWSCQRCFAHYDVQSILFNINEAMATRASVGKRKNITTGASAASQTPVPVGPAGGCESPLGSKEDLNAKENPDADEGDGKSNDLVLSCPYFRNETGGEGDRRIALSRANSASFSSGESCSFESSLSSHCTNAGVSVLEVPRENQPIHREKVKRYIIEHVDLGAYYYRKFFYGKEHQNYFGIDENLGPVAVSIRREKVEDPREKEGSQFNYRVAFRTSELTTLRGAILEDAVPSTARHGTARGLPLKEVLEYVIPELSIPCLRQAANSPKVPEQLLKLDEQGLSFQHKIGILYCKAGQSTEEEMYNNETAGPAFEEFLDLLGQRVRLKGFSKYRAQLDNKTDSTGTHSLYTTYKDFELMFHVSTLLPYMPNNRQQLLRKRHIGNDIVTIVFQEPGALPFTPKNIRSHFQHVFVIVKVHNPCTENVCYSVGVFRSKDVPPFVPPIPKGVTFPRTGVFRDFLLAKGINAENAAHKSEKFRAMATRTRHEYLKDLAENFVTTTTVDTSAKFSFITLGAKKKERVKPRTDAHLFSIGAIMWHVVARYFGQSADIECLLGISNEFIMLIEKESKNVAFNCSCRDVIGWTSGLVSIKIFYERGECILLSSVDNSSEDIREIVQRLVIVTRGCETVEMTLRRNGLGQLGFHVNFEGIVADVEPFGFAWKAGLRQGSRLVEICKVAVATLTHEQMIDLLRTSVTVKVVIIQPHEDGSPRRGCSELCRIPMVEYKLDSEGTPCEYKTPFRRNTTWHRVPTPALQPVSRASPVPGTPDRLQCQPLLQQAQAAIPRSTSFDRKLPDGTRSSPSNQSSSSDPGPGGSGPWRPQVGYDGCPSPLLLEPQGPGSVECDGSGDHEDLMEVGRLPETKWHGPPSKVLSSYKERALQKDGSCKDSPNKLSHIGDKSCSSHSSSNTLSSNTSSNSDDKHFGSGDLMDPELLGLTYIKGASTDSGIDTTPCMPATILGPMHLTGSRSLIHSRAEQWADAADVSGADEDPAKMYTLHGYASAISSSAADGSMGDLSEVSSHSSGSHRSGSPSTHCSKSTGSLDSSKVYIVTHSGGQQVPGAVAKPYHRQGAANKYVIGWKKSEGSPPPEEPEVTECPRIYGEMDIMSTASQHPAVVGDSVPEAQHVLSKDDFLKLMLPDSPLVEEGRRKFSFYGNLSPRRSLYRTLSDESVCSNRRGSSFASSRSSILDQALPNDILFSTTPPYHSTLPPRTHPAPSMGSLRNEFWFSDGSLSDKSKCADPGLMPLPDTAAGLDWSHLVDAARAFEGLDSDEELGLLCHHASYLDQRVASFCTLTDLQHGQELEGAPELSLCVDPTSGKEFMDTPGERSPSTLTGKVNQLELILRQLQTDLRKEKQDKAVLQAEVQHLRQDNMRLQEESQTATAQLRTFTEWFFSTIDKKV</sequence>
<keyword id="KW-0175">Coiled coil</keyword>
<keyword id="KW-0343">GTPase activation</keyword>
<keyword id="KW-0597">Phosphoprotein</keyword>
<keyword id="KW-1185">Reference proteome</keyword>
<dbReference type="EMBL" id="AY043227">
    <property type="protein sequence ID" value="AAL02130.1"/>
    <property type="molecule type" value="mRNA"/>
</dbReference>
<dbReference type="RefSeq" id="NP_001009704.1">
    <property type="nucleotide sequence ID" value="NM_001009704.1"/>
</dbReference>
<dbReference type="SMR" id="Q5JCS6"/>
<dbReference type="BioGRID" id="262684">
    <property type="interactions" value="1"/>
</dbReference>
<dbReference type="FunCoup" id="Q5JCS6">
    <property type="interactions" value="583"/>
</dbReference>
<dbReference type="STRING" id="10116.ENSRNOP00000026843"/>
<dbReference type="GlyGen" id="Q5JCS6">
    <property type="glycosylation" value="2 sites"/>
</dbReference>
<dbReference type="iPTMnet" id="Q5JCS6"/>
<dbReference type="PhosphoSitePlus" id="Q5JCS6"/>
<dbReference type="PaxDb" id="10116-ENSRNOP00000026843"/>
<dbReference type="GeneID" id="361442"/>
<dbReference type="KEGG" id="rno:361442"/>
<dbReference type="UCSC" id="RGD:1306269">
    <property type="organism name" value="rat"/>
</dbReference>
<dbReference type="AGR" id="RGD:1306269"/>
<dbReference type="CTD" id="57568"/>
<dbReference type="RGD" id="1306269">
    <property type="gene designation" value="Sipa1l2"/>
</dbReference>
<dbReference type="eggNOG" id="KOG3686">
    <property type="taxonomic scope" value="Eukaryota"/>
</dbReference>
<dbReference type="InParanoid" id="Q5JCS6"/>
<dbReference type="PhylomeDB" id="Q5JCS6"/>
<dbReference type="PRO" id="PR:Q5JCS6"/>
<dbReference type="Proteomes" id="UP000002494">
    <property type="component" value="Unplaced"/>
</dbReference>
<dbReference type="GO" id="GO:0005737">
    <property type="term" value="C:cytoplasm"/>
    <property type="evidence" value="ECO:0000318"/>
    <property type="project" value="GO_Central"/>
</dbReference>
<dbReference type="GO" id="GO:0098978">
    <property type="term" value="C:glutamatergic synapse"/>
    <property type="evidence" value="ECO:0000314"/>
    <property type="project" value="SynGO"/>
</dbReference>
<dbReference type="GO" id="GO:0099092">
    <property type="term" value="C:postsynaptic density, intracellular component"/>
    <property type="evidence" value="ECO:0000314"/>
    <property type="project" value="SynGO"/>
</dbReference>
<dbReference type="GO" id="GO:0098793">
    <property type="term" value="C:presynapse"/>
    <property type="evidence" value="ECO:0000314"/>
    <property type="project" value="SynGO"/>
</dbReference>
<dbReference type="GO" id="GO:0005096">
    <property type="term" value="F:GTPase activator activity"/>
    <property type="evidence" value="ECO:0000318"/>
    <property type="project" value="GO_Central"/>
</dbReference>
<dbReference type="GO" id="GO:0098928">
    <property type="term" value="P:presynaptic signal transduction"/>
    <property type="evidence" value="ECO:0000266"/>
    <property type="project" value="RGD"/>
</dbReference>
<dbReference type="GO" id="GO:0051056">
    <property type="term" value="P:regulation of small GTPase mediated signal transduction"/>
    <property type="evidence" value="ECO:0007669"/>
    <property type="project" value="InterPro"/>
</dbReference>
<dbReference type="CDD" id="cd06745">
    <property type="entry name" value="PDZ_SIPA1-like"/>
    <property type="match status" value="1"/>
</dbReference>
<dbReference type="FunFam" id="3.40.50.11210:FF:000002">
    <property type="entry name" value="Signal-induced proliferation-associated 1-like protein 1"/>
    <property type="match status" value="1"/>
</dbReference>
<dbReference type="FunFam" id="2.30.42.10:FF:000027">
    <property type="entry name" value="Signal-induced proliferation-associated 1-like protein 1 isoform 2"/>
    <property type="match status" value="1"/>
</dbReference>
<dbReference type="Gene3D" id="2.30.42.10">
    <property type="match status" value="1"/>
</dbReference>
<dbReference type="Gene3D" id="6.10.140.210">
    <property type="match status" value="1"/>
</dbReference>
<dbReference type="Gene3D" id="3.40.50.11210">
    <property type="entry name" value="Rap/Ran-GAP"/>
    <property type="match status" value="1"/>
</dbReference>
<dbReference type="InterPro" id="IPR001478">
    <property type="entry name" value="PDZ"/>
</dbReference>
<dbReference type="InterPro" id="IPR036034">
    <property type="entry name" value="PDZ_sf"/>
</dbReference>
<dbReference type="InterPro" id="IPR035974">
    <property type="entry name" value="Rap/Ran-GAP_sf"/>
</dbReference>
<dbReference type="InterPro" id="IPR000331">
    <property type="entry name" value="Rap/Ran_GAP_dom"/>
</dbReference>
<dbReference type="InterPro" id="IPR050989">
    <property type="entry name" value="Rap1_Ran_GAP"/>
</dbReference>
<dbReference type="InterPro" id="IPR021818">
    <property type="entry name" value="SIPA1L_C"/>
</dbReference>
<dbReference type="PANTHER" id="PTHR15711">
    <property type="entry name" value="RAP GTPASE-ACTIVATING PROTEIN"/>
    <property type="match status" value="1"/>
</dbReference>
<dbReference type="PANTHER" id="PTHR15711:SF7">
    <property type="entry name" value="SIGNAL-INDUCED PROLIFERATION-ASSOCIATED 1-LIKE PROTEIN 2"/>
    <property type="match status" value="1"/>
</dbReference>
<dbReference type="Pfam" id="PF00595">
    <property type="entry name" value="PDZ"/>
    <property type="match status" value="1"/>
</dbReference>
<dbReference type="Pfam" id="PF21022">
    <property type="entry name" value="Rap-GAP_dimer"/>
    <property type="match status" value="1"/>
</dbReference>
<dbReference type="Pfam" id="PF02145">
    <property type="entry name" value="Rap_GAP"/>
    <property type="match status" value="1"/>
</dbReference>
<dbReference type="Pfam" id="PF11881">
    <property type="entry name" value="SPAR_C"/>
    <property type="match status" value="1"/>
</dbReference>
<dbReference type="SMART" id="SM00228">
    <property type="entry name" value="PDZ"/>
    <property type="match status" value="1"/>
</dbReference>
<dbReference type="SUPFAM" id="SSF50156">
    <property type="entry name" value="PDZ domain-like"/>
    <property type="match status" value="1"/>
</dbReference>
<dbReference type="SUPFAM" id="SSF111347">
    <property type="entry name" value="Rap/Ran-GAP"/>
    <property type="match status" value="1"/>
</dbReference>
<dbReference type="PROSITE" id="PS50106">
    <property type="entry name" value="PDZ"/>
    <property type="match status" value="1"/>
</dbReference>
<dbReference type="PROSITE" id="PS50085">
    <property type="entry name" value="RAPGAP"/>
    <property type="match status" value="1"/>
</dbReference>
<evidence type="ECO:0000250" key="1">
    <source>
        <dbReference type="UniProtKB" id="Q80TE4"/>
    </source>
</evidence>
<evidence type="ECO:0000250" key="2">
    <source>
        <dbReference type="UniProtKB" id="Q9P2F8"/>
    </source>
</evidence>
<evidence type="ECO:0000255" key="3"/>
<evidence type="ECO:0000255" key="4">
    <source>
        <dbReference type="PROSITE-ProRule" id="PRU00143"/>
    </source>
</evidence>
<evidence type="ECO:0000255" key="5">
    <source>
        <dbReference type="PROSITE-ProRule" id="PRU00165"/>
    </source>
</evidence>
<evidence type="ECO:0000256" key="6">
    <source>
        <dbReference type="SAM" id="MobiDB-lite"/>
    </source>
</evidence>
<evidence type="ECO:0007744" key="7">
    <source>
    </source>
</evidence>
<feature type="chain" id="PRO_0000056751" description="Signal-induced proliferation-associated 1-like protein 2">
    <location>
        <begin position="1"/>
        <end position="1722"/>
    </location>
</feature>
<feature type="domain" description="Rap-GAP" evidence="5">
    <location>
        <begin position="596"/>
        <end position="813"/>
    </location>
</feature>
<feature type="domain" description="PDZ" evidence="4">
    <location>
        <begin position="951"/>
        <end position="1027"/>
    </location>
</feature>
<feature type="region of interest" description="Disordered" evidence="6">
    <location>
        <begin position="1"/>
        <end position="29"/>
    </location>
</feature>
<feature type="region of interest" description="Disordered" evidence="6">
    <location>
        <begin position="45"/>
        <end position="73"/>
    </location>
</feature>
<feature type="region of interest" description="Disordered" evidence="6">
    <location>
        <begin position="362"/>
        <end position="404"/>
    </location>
</feature>
<feature type="region of interest" description="Disordered" evidence="6">
    <location>
        <begin position="1068"/>
        <end position="1172"/>
    </location>
</feature>
<feature type="region of interest" description="Disordered" evidence="6">
    <location>
        <begin position="1197"/>
        <end position="1246"/>
    </location>
</feature>
<feature type="region of interest" description="Disordered" evidence="6">
    <location>
        <begin position="1328"/>
        <end position="1361"/>
    </location>
</feature>
<feature type="coiled-coil region" evidence="3">
    <location>
        <begin position="1652"/>
        <end position="1712"/>
    </location>
</feature>
<feature type="compositionally biased region" description="Gly residues" evidence="6">
    <location>
        <begin position="57"/>
        <end position="66"/>
    </location>
</feature>
<feature type="compositionally biased region" description="Basic and acidic residues" evidence="6">
    <location>
        <begin position="384"/>
        <end position="403"/>
    </location>
</feature>
<feature type="compositionally biased region" description="Low complexity" evidence="6">
    <location>
        <begin position="1091"/>
        <end position="1103"/>
    </location>
</feature>
<feature type="compositionally biased region" description="Low complexity" evidence="6">
    <location>
        <begin position="1120"/>
        <end position="1131"/>
    </location>
</feature>
<feature type="compositionally biased region" description="Basic and acidic residues" evidence="6">
    <location>
        <begin position="1197"/>
        <end position="1218"/>
    </location>
</feature>
<feature type="compositionally biased region" description="Low complexity" evidence="6">
    <location>
        <begin position="1220"/>
        <end position="1237"/>
    </location>
</feature>
<feature type="compositionally biased region" description="Low complexity" evidence="6">
    <location>
        <begin position="1328"/>
        <end position="1355"/>
    </location>
</feature>
<feature type="modified residue" description="Phosphoserine" evidence="7">
    <location>
        <position position="149"/>
    </location>
</feature>
<feature type="modified residue" description="Phosphoserine" evidence="1">
    <location>
        <position position="380"/>
    </location>
</feature>
<feature type="modified residue" description="Phosphoserine" evidence="1">
    <location>
        <position position="384"/>
    </location>
</feature>
<feature type="modified residue" description="Phosphoserine" evidence="2">
    <location>
        <position position="1030"/>
    </location>
</feature>
<feature type="modified residue" description="Phosphoserine" evidence="7">
    <location>
        <position position="1245"/>
    </location>
</feature>
<feature type="modified residue" description="Phosphoserine" evidence="7">
    <location>
        <position position="1461"/>
    </location>
</feature>
<feature type="modified residue" description="Phosphoserine" evidence="1">
    <location>
        <position position="1472"/>
    </location>
</feature>
<feature type="modified residue" description="Phosphoserine" evidence="7">
    <location>
        <position position="1478"/>
    </location>
</feature>
<feature type="modified residue" description="Phosphoserine" evidence="7">
    <location>
        <position position="1488"/>
    </location>
</feature>
<feature type="modified residue" description="Phosphoserine" evidence="7">
    <location>
        <position position="1549"/>
    </location>
</feature>
<feature type="modified residue" description="Phosphoserine" evidence="2">
    <location>
        <position position="1552"/>
    </location>
</feature>
<feature type="modified residue" description="Phosphoserine" evidence="1">
    <location>
        <position position="1591"/>
    </location>
</feature>
<reference key="1">
    <citation type="submission" date="2001-07" db="EMBL/GenBank/DDBJ databases">
        <title>Cloning of a novel family of serine rich synapse associated proteins: SERSAPs.</title>
        <authorList>
            <person name="Boeckers T.M."/>
            <person name="Wendholt D."/>
            <person name="Bockmann J."/>
        </authorList>
    </citation>
    <scope>NUCLEOTIDE SEQUENCE [MRNA]</scope>
    <source>
        <strain>Wistar</strain>
    </source>
</reference>
<reference key="2">
    <citation type="journal article" date="2012" name="Nat. Commun.">
        <title>Quantitative maps of protein phosphorylation sites across 14 different rat organs and tissues.</title>
        <authorList>
            <person name="Lundby A."/>
            <person name="Secher A."/>
            <person name="Lage K."/>
            <person name="Nordsborg N.B."/>
            <person name="Dmytriyev A."/>
            <person name="Lundby C."/>
            <person name="Olsen J.V."/>
        </authorList>
    </citation>
    <scope>PHOSPHORYLATION [LARGE SCALE ANALYSIS] AT SER-149; SER-1245; SER-1461; SER-1478; SER-1488 AND SER-1549</scope>
    <scope>IDENTIFICATION BY MASS SPECTROMETRY [LARGE SCALE ANALYSIS]</scope>
</reference>
<accession>Q5JCS6</accession>
<gene>
    <name type="primary">Sipa1l2</name>
    <name type="synonym">Sersap2</name>
</gene>
<name>SI1L2_RAT</name>
<protein>
    <recommendedName>
        <fullName>Signal-induced proliferation-associated 1-like protein 2</fullName>
        <shortName>SIPA1-like protein 2</shortName>
    </recommendedName>
    <alternativeName>
        <fullName>Serine-rich synapse-associated protein</fullName>
    </alternativeName>
</protein>
<proteinExistence type="evidence at protein level"/>
<organism>
    <name type="scientific">Rattus norvegicus</name>
    <name type="common">Rat</name>
    <dbReference type="NCBI Taxonomy" id="10116"/>
    <lineage>
        <taxon>Eukaryota</taxon>
        <taxon>Metazoa</taxon>
        <taxon>Chordata</taxon>
        <taxon>Craniata</taxon>
        <taxon>Vertebrata</taxon>
        <taxon>Euteleostomi</taxon>
        <taxon>Mammalia</taxon>
        <taxon>Eutheria</taxon>
        <taxon>Euarchontoglires</taxon>
        <taxon>Glires</taxon>
        <taxon>Rodentia</taxon>
        <taxon>Myomorpha</taxon>
        <taxon>Muroidea</taxon>
        <taxon>Muridae</taxon>
        <taxon>Murinae</taxon>
        <taxon>Rattus</taxon>
    </lineage>
</organism>